<feature type="chain" id="PRO_0000325979" description="Myelin-associated neurite-outgrowth inhibitor">
    <location>
        <begin position="1"/>
        <end position="194"/>
    </location>
</feature>
<feature type="topological domain" description="Cytoplasmic" evidence="3">
    <location>
        <begin position="1"/>
        <end position="18"/>
    </location>
</feature>
<feature type="transmembrane region" description="Helical" evidence="3">
    <location>
        <begin position="19"/>
        <end position="41"/>
    </location>
</feature>
<feature type="topological domain" description="Extracellular" evidence="3">
    <location>
        <begin position="42"/>
        <end position="141"/>
    </location>
</feature>
<feature type="transmembrane region" description="Helical" evidence="3">
    <location>
        <begin position="142"/>
        <end position="163"/>
    </location>
</feature>
<feature type="topological domain" description="Cytoplasmic" evidence="3">
    <location>
        <begin position="164"/>
        <end position="194"/>
    </location>
</feature>
<feature type="modified residue" description="N-acetylmethionine" evidence="1">
    <location>
        <position position="1"/>
    </location>
</feature>
<feature type="modified residue" description="Phosphoserine" evidence="1">
    <location>
        <position position="6"/>
    </location>
</feature>
<feature type="glycosylation site" description="N-linked (GlcNAc...) asparagine" evidence="3">
    <location>
        <position position="45"/>
    </location>
</feature>
<feature type="sequence conflict" description="In Ref. 2; BAE25820." evidence="5" ref="2">
    <original>Q</original>
    <variation>L</variation>
    <location>
        <position position="49"/>
    </location>
</feature>
<gene>
    <name type="primary">Fam168b</name>
    <name type="synonym">Kiaa4042</name>
</gene>
<comment type="function">
    <text evidence="4">Inhibitor of neuronal axonal outgrowth. Acts as a negative regulator of CDC42 and STAT3 and a positive regulator of STMN2. Positive regulator of CDC27.</text>
</comment>
<comment type="subunit">
    <text evidence="1 4">May form homodimers (By similarity). May interact with DAZAP2, FAM168A, PRDX6, RBM6, TMTC1 and YPEL2 (By similarity). Interacts with CDC27 (PubMed:20716133).</text>
</comment>
<comment type="subcellular location">
    <subcellularLocation>
        <location evidence="2">Cytoplasm</location>
        <location evidence="2">Perinuclear region</location>
    </subcellularLocation>
    <subcellularLocation>
        <location evidence="4">Cell membrane</location>
        <topology evidence="4">Multi-pass membrane protein</topology>
    </subcellularLocation>
    <subcellularLocation>
        <location evidence="4">Cell projection</location>
        <location evidence="4">Axon</location>
    </subcellularLocation>
    <text evidence="4">Expressed in neuronal cell bodies and axonal fibers.</text>
</comment>
<comment type="tissue specificity">
    <text evidence="4">Predominantly expressed in the brain, including olfactory bulb, cortex and cerebellum (at protein level).</text>
</comment>
<comment type="developmental stage">
    <text evidence="4">Specifically expressed in differentiated neurons, but absent from proliferating neural stem cells.</text>
</comment>
<comment type="induction">
    <text evidence="4">Up-regulated by different neurotrophins, including NGF and BDNF, but not by growth factors, such as EGF.</text>
</comment>
<comment type="PTM">
    <text evidence="4">N-glycosylated.</text>
</comment>
<comment type="similarity">
    <text evidence="5">Belongs to the FAM168 family.</text>
</comment>
<comment type="sequence caution" evidence="5">
    <conflict type="erroneous initiation">
        <sequence resource="EMBL-CDS" id="BAD90278"/>
    </conflict>
    <text>Extended N-terminus.</text>
</comment>
<proteinExistence type="evidence at protein level"/>
<protein>
    <recommendedName>
        <fullName>Myelin-associated neurite-outgrowth inhibitor</fullName>
        <shortName>Mani</shortName>
    </recommendedName>
</protein>
<evidence type="ECO:0000250" key="1">
    <source>
        <dbReference type="UniProtKB" id="A1KXE4"/>
    </source>
</evidence>
<evidence type="ECO:0000250" key="2">
    <source>
        <dbReference type="UniProtKB" id="D4AEP3"/>
    </source>
</evidence>
<evidence type="ECO:0000255" key="3"/>
<evidence type="ECO:0000269" key="4">
    <source>
    </source>
</evidence>
<evidence type="ECO:0000305" key="5"/>
<keyword id="KW-0007">Acetylation</keyword>
<keyword id="KW-1003">Cell membrane</keyword>
<keyword id="KW-0966">Cell projection</keyword>
<keyword id="KW-0963">Cytoplasm</keyword>
<keyword id="KW-0325">Glycoprotein</keyword>
<keyword id="KW-0472">Membrane</keyword>
<keyword id="KW-0597">Phosphoprotein</keyword>
<keyword id="KW-1185">Reference proteome</keyword>
<keyword id="KW-0812">Transmembrane</keyword>
<keyword id="KW-1133">Transmembrane helix</keyword>
<sequence length="194" mass="20194">MNPVYSPGSSGVPYANAKGIGYPAGFPVGYAAAPAYSPNMYPGANPTFQTGYTPGTPYKVSCSPTSGAVPPYSSSPNPYQTAVYPVRSAYPQQSPYAQQGTYYTQPLYAAPPHVIHHTTVVQPNGMPATVYPAPIPPPRGSGVTMGMVAGTTMAMSAGTLLTAHSPTPVAPHPVTVPTYRAPGTPTYSYVPPQW</sequence>
<dbReference type="EMBL" id="AK220453">
    <property type="protein sequence ID" value="BAD90278.1"/>
    <property type="status" value="ALT_INIT"/>
    <property type="molecule type" value="mRNA"/>
</dbReference>
<dbReference type="EMBL" id="AK144298">
    <property type="protein sequence ID" value="BAE25820.1"/>
    <property type="molecule type" value="mRNA"/>
</dbReference>
<dbReference type="EMBL" id="BC040511">
    <property type="protein sequence ID" value="AAH40511.1"/>
    <property type="molecule type" value="mRNA"/>
</dbReference>
<dbReference type="EMBL" id="BC043098">
    <property type="protein sequence ID" value="AAH43098.1"/>
    <property type="molecule type" value="mRNA"/>
</dbReference>
<dbReference type="EMBL" id="BC059247">
    <property type="protein sequence ID" value="AAH59247.1"/>
    <property type="molecule type" value="mRNA"/>
</dbReference>
<dbReference type="CCDS" id="CCDS14873.1"/>
<dbReference type="RefSeq" id="NP_001153707.1">
    <property type="nucleotide sequence ID" value="NM_001160235.1"/>
</dbReference>
<dbReference type="RefSeq" id="NP_001153708.1">
    <property type="nucleotide sequence ID" value="NM_001160236.1"/>
</dbReference>
<dbReference type="RefSeq" id="NP_778162.1">
    <property type="nucleotide sequence ID" value="NM_174997.3"/>
</dbReference>
<dbReference type="FunCoup" id="Q80XQ8">
    <property type="interactions" value="3026"/>
</dbReference>
<dbReference type="STRING" id="10090.ENSMUSP00000131720"/>
<dbReference type="GlyCosmos" id="Q80XQ8">
    <property type="glycosylation" value="1 site, No reported glycans"/>
</dbReference>
<dbReference type="GlyGen" id="Q80XQ8">
    <property type="glycosylation" value="1 site"/>
</dbReference>
<dbReference type="iPTMnet" id="Q80XQ8"/>
<dbReference type="PhosphoSitePlus" id="Q80XQ8"/>
<dbReference type="ProteomicsDB" id="275823"/>
<dbReference type="Pumba" id="Q80XQ8"/>
<dbReference type="Antibodypedia" id="50282">
    <property type="antibodies" value="50 antibodies from 14 providers"/>
</dbReference>
<dbReference type="DNASU" id="214469"/>
<dbReference type="Ensembl" id="ENSMUST00000047534.12">
    <property type="protein sequence ID" value="ENSMUSP00000042212.6"/>
    <property type="gene ID" value="ENSMUSG00000037503.13"/>
</dbReference>
<dbReference type="GeneID" id="214469"/>
<dbReference type="KEGG" id="mmu:214469"/>
<dbReference type="UCSC" id="uc007apj.2">
    <property type="organism name" value="mouse"/>
</dbReference>
<dbReference type="AGR" id="MGI:2448487"/>
<dbReference type="CTD" id="130074"/>
<dbReference type="MGI" id="MGI:2448487">
    <property type="gene designation" value="Fam168b"/>
</dbReference>
<dbReference type="VEuPathDB" id="HostDB:ENSMUSG00000037503"/>
<dbReference type="eggNOG" id="ENOG502QQDS">
    <property type="taxonomic scope" value="Eukaryota"/>
</dbReference>
<dbReference type="GeneTree" id="ENSGT00390000005140"/>
<dbReference type="HOGENOM" id="CLU_065824_1_0_1"/>
<dbReference type="InParanoid" id="Q80XQ8"/>
<dbReference type="OMA" id="AMYAPHI"/>
<dbReference type="OrthoDB" id="9893817at2759"/>
<dbReference type="PhylomeDB" id="Q80XQ8"/>
<dbReference type="TreeFam" id="TF331128"/>
<dbReference type="BioGRID-ORCS" id="214469">
    <property type="hits" value="4 hits in 77 CRISPR screens"/>
</dbReference>
<dbReference type="ChiTaRS" id="Fam168b">
    <property type="organism name" value="mouse"/>
</dbReference>
<dbReference type="PRO" id="PR:Q80XQ8"/>
<dbReference type="Proteomes" id="UP000000589">
    <property type="component" value="Chromosome 1"/>
</dbReference>
<dbReference type="RNAct" id="Q80XQ8">
    <property type="molecule type" value="protein"/>
</dbReference>
<dbReference type="Bgee" id="ENSMUSG00000037503">
    <property type="expression patterns" value="Expressed in otolith organ and 229 other cell types or tissues"/>
</dbReference>
<dbReference type="ExpressionAtlas" id="Q80XQ8">
    <property type="expression patterns" value="baseline and differential"/>
</dbReference>
<dbReference type="GO" id="GO:0030424">
    <property type="term" value="C:axon"/>
    <property type="evidence" value="ECO:0007669"/>
    <property type="project" value="UniProtKB-SubCell"/>
</dbReference>
<dbReference type="GO" id="GO:0016020">
    <property type="term" value="C:membrane"/>
    <property type="evidence" value="ECO:0000314"/>
    <property type="project" value="MGI"/>
</dbReference>
<dbReference type="GO" id="GO:0048471">
    <property type="term" value="C:perinuclear region of cytoplasm"/>
    <property type="evidence" value="ECO:0007669"/>
    <property type="project" value="UniProtKB-SubCell"/>
</dbReference>
<dbReference type="GO" id="GO:0005886">
    <property type="term" value="C:plasma membrane"/>
    <property type="evidence" value="ECO:0007669"/>
    <property type="project" value="UniProtKB-SubCell"/>
</dbReference>
<dbReference type="GO" id="GO:0007409">
    <property type="term" value="P:axonogenesis"/>
    <property type="evidence" value="ECO:0000315"/>
    <property type="project" value="MGI"/>
</dbReference>
<dbReference type="GO" id="GO:0010467">
    <property type="term" value="P:gene expression"/>
    <property type="evidence" value="ECO:0000315"/>
    <property type="project" value="MGI"/>
</dbReference>
<dbReference type="GO" id="GO:0022008">
    <property type="term" value="P:neurogenesis"/>
    <property type="evidence" value="ECO:0000315"/>
    <property type="project" value="MGI"/>
</dbReference>
<dbReference type="GO" id="GO:0030182">
    <property type="term" value="P:neuron differentiation"/>
    <property type="evidence" value="ECO:0000315"/>
    <property type="project" value="MGI"/>
</dbReference>
<dbReference type="InterPro" id="IPR029247">
    <property type="entry name" value="FAM168A/MANI"/>
</dbReference>
<dbReference type="PANTHER" id="PTHR31844">
    <property type="entry name" value="MYELIN-ASSOCIATED NEURITE-OUTGROWTH INHIBITOR-RELATED"/>
    <property type="match status" value="1"/>
</dbReference>
<dbReference type="Pfam" id="PF14944">
    <property type="entry name" value="TCRP1"/>
    <property type="match status" value="2"/>
</dbReference>
<organism>
    <name type="scientific">Mus musculus</name>
    <name type="common">Mouse</name>
    <dbReference type="NCBI Taxonomy" id="10090"/>
    <lineage>
        <taxon>Eukaryota</taxon>
        <taxon>Metazoa</taxon>
        <taxon>Chordata</taxon>
        <taxon>Craniata</taxon>
        <taxon>Vertebrata</taxon>
        <taxon>Euteleostomi</taxon>
        <taxon>Mammalia</taxon>
        <taxon>Eutheria</taxon>
        <taxon>Euarchontoglires</taxon>
        <taxon>Glires</taxon>
        <taxon>Rodentia</taxon>
        <taxon>Myomorpha</taxon>
        <taxon>Muroidea</taxon>
        <taxon>Muridae</taxon>
        <taxon>Murinae</taxon>
        <taxon>Mus</taxon>
        <taxon>Mus</taxon>
    </lineage>
</organism>
<reference key="1">
    <citation type="submission" date="2005-02" db="EMBL/GenBank/DDBJ databases">
        <title>Prediction of the coding sequences of mouse homologues of KIAA gene. The complete nucleotide sequences of mouse KIAA-homologous cDNAs identified by screening of terminal sequences of cDNA clones randomly sampled from size-fractionated libraries.</title>
        <authorList>
            <person name="Okazaki N."/>
            <person name="Kikuno R.F."/>
            <person name="Ohara R."/>
            <person name="Inamoto S."/>
            <person name="Nagase T."/>
            <person name="Ohara O."/>
            <person name="Koga H."/>
        </authorList>
    </citation>
    <scope>NUCLEOTIDE SEQUENCE [LARGE SCALE MRNA]</scope>
    <source>
        <tissue>Fetal brain</tissue>
    </source>
</reference>
<reference key="2">
    <citation type="journal article" date="2005" name="Science">
        <title>The transcriptional landscape of the mammalian genome.</title>
        <authorList>
            <person name="Carninci P."/>
            <person name="Kasukawa T."/>
            <person name="Katayama S."/>
            <person name="Gough J."/>
            <person name="Frith M.C."/>
            <person name="Maeda N."/>
            <person name="Oyama R."/>
            <person name="Ravasi T."/>
            <person name="Lenhard B."/>
            <person name="Wells C."/>
            <person name="Kodzius R."/>
            <person name="Shimokawa K."/>
            <person name="Bajic V.B."/>
            <person name="Brenner S.E."/>
            <person name="Batalov S."/>
            <person name="Forrest A.R."/>
            <person name="Zavolan M."/>
            <person name="Davis M.J."/>
            <person name="Wilming L.G."/>
            <person name="Aidinis V."/>
            <person name="Allen J.E."/>
            <person name="Ambesi-Impiombato A."/>
            <person name="Apweiler R."/>
            <person name="Aturaliya R.N."/>
            <person name="Bailey T.L."/>
            <person name="Bansal M."/>
            <person name="Baxter L."/>
            <person name="Beisel K.W."/>
            <person name="Bersano T."/>
            <person name="Bono H."/>
            <person name="Chalk A.M."/>
            <person name="Chiu K.P."/>
            <person name="Choudhary V."/>
            <person name="Christoffels A."/>
            <person name="Clutterbuck D.R."/>
            <person name="Crowe M.L."/>
            <person name="Dalla E."/>
            <person name="Dalrymple B.P."/>
            <person name="de Bono B."/>
            <person name="Della Gatta G."/>
            <person name="di Bernardo D."/>
            <person name="Down T."/>
            <person name="Engstrom P."/>
            <person name="Fagiolini M."/>
            <person name="Faulkner G."/>
            <person name="Fletcher C.F."/>
            <person name="Fukushima T."/>
            <person name="Furuno M."/>
            <person name="Futaki S."/>
            <person name="Gariboldi M."/>
            <person name="Georgii-Hemming P."/>
            <person name="Gingeras T.R."/>
            <person name="Gojobori T."/>
            <person name="Green R.E."/>
            <person name="Gustincich S."/>
            <person name="Harbers M."/>
            <person name="Hayashi Y."/>
            <person name="Hensch T.K."/>
            <person name="Hirokawa N."/>
            <person name="Hill D."/>
            <person name="Huminiecki L."/>
            <person name="Iacono M."/>
            <person name="Ikeo K."/>
            <person name="Iwama A."/>
            <person name="Ishikawa T."/>
            <person name="Jakt M."/>
            <person name="Kanapin A."/>
            <person name="Katoh M."/>
            <person name="Kawasawa Y."/>
            <person name="Kelso J."/>
            <person name="Kitamura H."/>
            <person name="Kitano H."/>
            <person name="Kollias G."/>
            <person name="Krishnan S.P."/>
            <person name="Kruger A."/>
            <person name="Kummerfeld S.K."/>
            <person name="Kurochkin I.V."/>
            <person name="Lareau L.F."/>
            <person name="Lazarevic D."/>
            <person name="Lipovich L."/>
            <person name="Liu J."/>
            <person name="Liuni S."/>
            <person name="McWilliam S."/>
            <person name="Madan Babu M."/>
            <person name="Madera M."/>
            <person name="Marchionni L."/>
            <person name="Matsuda H."/>
            <person name="Matsuzawa S."/>
            <person name="Miki H."/>
            <person name="Mignone F."/>
            <person name="Miyake S."/>
            <person name="Morris K."/>
            <person name="Mottagui-Tabar S."/>
            <person name="Mulder N."/>
            <person name="Nakano N."/>
            <person name="Nakauchi H."/>
            <person name="Ng P."/>
            <person name="Nilsson R."/>
            <person name="Nishiguchi S."/>
            <person name="Nishikawa S."/>
            <person name="Nori F."/>
            <person name="Ohara O."/>
            <person name="Okazaki Y."/>
            <person name="Orlando V."/>
            <person name="Pang K.C."/>
            <person name="Pavan W.J."/>
            <person name="Pavesi G."/>
            <person name="Pesole G."/>
            <person name="Petrovsky N."/>
            <person name="Piazza S."/>
            <person name="Reed J."/>
            <person name="Reid J.F."/>
            <person name="Ring B.Z."/>
            <person name="Ringwald M."/>
            <person name="Rost B."/>
            <person name="Ruan Y."/>
            <person name="Salzberg S.L."/>
            <person name="Sandelin A."/>
            <person name="Schneider C."/>
            <person name="Schoenbach C."/>
            <person name="Sekiguchi K."/>
            <person name="Semple C.A."/>
            <person name="Seno S."/>
            <person name="Sessa L."/>
            <person name="Sheng Y."/>
            <person name="Shibata Y."/>
            <person name="Shimada H."/>
            <person name="Shimada K."/>
            <person name="Silva D."/>
            <person name="Sinclair B."/>
            <person name="Sperling S."/>
            <person name="Stupka E."/>
            <person name="Sugiura K."/>
            <person name="Sultana R."/>
            <person name="Takenaka Y."/>
            <person name="Taki K."/>
            <person name="Tammoja K."/>
            <person name="Tan S.L."/>
            <person name="Tang S."/>
            <person name="Taylor M.S."/>
            <person name="Tegner J."/>
            <person name="Teichmann S.A."/>
            <person name="Ueda H.R."/>
            <person name="van Nimwegen E."/>
            <person name="Verardo R."/>
            <person name="Wei C.L."/>
            <person name="Yagi K."/>
            <person name="Yamanishi H."/>
            <person name="Zabarovsky E."/>
            <person name="Zhu S."/>
            <person name="Zimmer A."/>
            <person name="Hide W."/>
            <person name="Bult C."/>
            <person name="Grimmond S.M."/>
            <person name="Teasdale R.D."/>
            <person name="Liu E.T."/>
            <person name="Brusic V."/>
            <person name="Quackenbush J."/>
            <person name="Wahlestedt C."/>
            <person name="Mattick J.S."/>
            <person name="Hume D.A."/>
            <person name="Kai C."/>
            <person name="Sasaki D."/>
            <person name="Tomaru Y."/>
            <person name="Fukuda S."/>
            <person name="Kanamori-Katayama M."/>
            <person name="Suzuki M."/>
            <person name="Aoki J."/>
            <person name="Arakawa T."/>
            <person name="Iida J."/>
            <person name="Imamura K."/>
            <person name="Itoh M."/>
            <person name="Kato T."/>
            <person name="Kawaji H."/>
            <person name="Kawagashira N."/>
            <person name="Kawashima T."/>
            <person name="Kojima M."/>
            <person name="Kondo S."/>
            <person name="Konno H."/>
            <person name="Nakano K."/>
            <person name="Ninomiya N."/>
            <person name="Nishio T."/>
            <person name="Okada M."/>
            <person name="Plessy C."/>
            <person name="Shibata K."/>
            <person name="Shiraki T."/>
            <person name="Suzuki S."/>
            <person name="Tagami M."/>
            <person name="Waki K."/>
            <person name="Watahiki A."/>
            <person name="Okamura-Oho Y."/>
            <person name="Suzuki H."/>
            <person name="Kawai J."/>
            <person name="Hayashizaki Y."/>
        </authorList>
    </citation>
    <scope>NUCLEOTIDE SEQUENCE [LARGE SCALE MRNA]</scope>
    <source>
        <strain>C57BL/6J</strain>
        <tissue>Diencephalon</tissue>
    </source>
</reference>
<reference key="3">
    <citation type="journal article" date="2004" name="Genome Res.">
        <title>The status, quality, and expansion of the NIH full-length cDNA project: the Mammalian Gene Collection (MGC).</title>
        <authorList>
            <consortium name="The MGC Project Team"/>
        </authorList>
    </citation>
    <scope>NUCLEOTIDE SEQUENCE [LARGE SCALE MRNA]</scope>
    <source>
        <strain>C57BL/6J</strain>
        <strain>FVB/N</strain>
        <tissue>Brain</tissue>
        <tissue>Mammary tumor</tissue>
    </source>
</reference>
<reference key="4">
    <citation type="journal article" date="2011" name="J. Cell. Mol. Med.">
        <title>The novel protein MANI modulates neurogenesis and neurite-cone growth.</title>
        <authorList>
            <person name="Mishra M."/>
            <person name="Akatsu H."/>
            <person name="Heese K."/>
        </authorList>
    </citation>
    <scope>FUNCTION</scope>
    <scope>INTERACTION WITH CDC27</scope>
    <scope>SUBCELLULAR LOCATION</scope>
    <scope>INDUCTION</scope>
    <scope>TISSUE SPECIFICITY</scope>
    <scope>DEVELOPMENTAL STAGE</scope>
    <scope>GLYCOSYLATION</scope>
</reference>
<name>F168B_MOUSE</name>
<accession>Q80XQ8</accession>
<accession>Q3UNC7</accession>
<accession>Q5DTR7</accession>